<gene>
    <name evidence="1" type="primary">prfA</name>
    <name type="ordered locus">ABAYE1406</name>
</gene>
<dbReference type="EMBL" id="CU459141">
    <property type="protein sequence ID" value="CAM86316.1"/>
    <property type="molecule type" value="Genomic_DNA"/>
</dbReference>
<dbReference type="RefSeq" id="WP_000648007.1">
    <property type="nucleotide sequence ID" value="NZ_JBDGFB010000016.1"/>
</dbReference>
<dbReference type="SMR" id="B0V7E0"/>
<dbReference type="EnsemblBacteria" id="CAM86316">
    <property type="protein sequence ID" value="CAM86316"/>
    <property type="gene ID" value="ABAYE1406"/>
</dbReference>
<dbReference type="KEGG" id="aby:ABAYE1406"/>
<dbReference type="HOGENOM" id="CLU_036856_0_1_6"/>
<dbReference type="GO" id="GO:0005737">
    <property type="term" value="C:cytoplasm"/>
    <property type="evidence" value="ECO:0007669"/>
    <property type="project" value="UniProtKB-SubCell"/>
</dbReference>
<dbReference type="GO" id="GO:0016149">
    <property type="term" value="F:translation release factor activity, codon specific"/>
    <property type="evidence" value="ECO:0007669"/>
    <property type="project" value="UniProtKB-UniRule"/>
</dbReference>
<dbReference type="FunFam" id="3.30.160.20:FF:000004">
    <property type="entry name" value="Peptide chain release factor 1"/>
    <property type="match status" value="1"/>
</dbReference>
<dbReference type="FunFam" id="3.30.70.1660:FF:000002">
    <property type="entry name" value="Peptide chain release factor 1"/>
    <property type="match status" value="1"/>
</dbReference>
<dbReference type="FunFam" id="3.30.70.1660:FF:000004">
    <property type="entry name" value="Peptide chain release factor 1"/>
    <property type="match status" value="1"/>
</dbReference>
<dbReference type="Gene3D" id="3.30.160.20">
    <property type="match status" value="1"/>
</dbReference>
<dbReference type="Gene3D" id="3.30.70.1660">
    <property type="match status" value="1"/>
</dbReference>
<dbReference type="Gene3D" id="6.10.140.1950">
    <property type="match status" value="1"/>
</dbReference>
<dbReference type="HAMAP" id="MF_00093">
    <property type="entry name" value="Rel_fac_1"/>
    <property type="match status" value="1"/>
</dbReference>
<dbReference type="InterPro" id="IPR005139">
    <property type="entry name" value="PCRF"/>
</dbReference>
<dbReference type="InterPro" id="IPR000352">
    <property type="entry name" value="Pep_chain_release_fac_I"/>
</dbReference>
<dbReference type="InterPro" id="IPR045853">
    <property type="entry name" value="Pep_chain_release_fac_I_sf"/>
</dbReference>
<dbReference type="InterPro" id="IPR050057">
    <property type="entry name" value="Prokaryotic/Mito_RF"/>
</dbReference>
<dbReference type="InterPro" id="IPR004373">
    <property type="entry name" value="RF-1"/>
</dbReference>
<dbReference type="NCBIfam" id="TIGR00019">
    <property type="entry name" value="prfA"/>
    <property type="match status" value="1"/>
</dbReference>
<dbReference type="NCBIfam" id="NF001859">
    <property type="entry name" value="PRK00591.1"/>
    <property type="match status" value="1"/>
</dbReference>
<dbReference type="PANTHER" id="PTHR43804">
    <property type="entry name" value="LD18447P"/>
    <property type="match status" value="1"/>
</dbReference>
<dbReference type="PANTHER" id="PTHR43804:SF7">
    <property type="entry name" value="LD18447P"/>
    <property type="match status" value="1"/>
</dbReference>
<dbReference type="Pfam" id="PF03462">
    <property type="entry name" value="PCRF"/>
    <property type="match status" value="1"/>
</dbReference>
<dbReference type="Pfam" id="PF00472">
    <property type="entry name" value="RF-1"/>
    <property type="match status" value="1"/>
</dbReference>
<dbReference type="SMART" id="SM00937">
    <property type="entry name" value="PCRF"/>
    <property type="match status" value="1"/>
</dbReference>
<dbReference type="SUPFAM" id="SSF75620">
    <property type="entry name" value="Release factor"/>
    <property type="match status" value="1"/>
</dbReference>
<dbReference type="PROSITE" id="PS00745">
    <property type="entry name" value="RF_PROK_I"/>
    <property type="match status" value="1"/>
</dbReference>
<sequence>MKASLRLRLDQLCDRHEELTALLADAEVISDNKRFRKLSREHSDLTEITEVWGKYRQAEEDIETAEMMKSDPDFKDMAEEEIQANKVLLEELESQLNILMIPKDPNDSNAAYLEIRAGTGGDEAAIFSGDLFRMYSKYAESQGWRIEVLSENEGEHGGFKEVICRVDGDGVYGRLKFESGAHRVQRVPATESQGRVHTSACTVAILPEIDVDTNVEINPADLRIDTYRASGAGGQHINKTDSAVRITHIPTGTVVECQEERSQHKNKAKAMALLVSRLENAKRAAADAATSEMRRDLVGSGDRSERIRTYNYPQGRMTDHRINLTLYKLDAIMEGDLTELLDSLHREYQADQLAMLAQENGG</sequence>
<reference key="1">
    <citation type="journal article" date="2008" name="PLoS ONE">
        <title>Comparative analysis of Acinetobacters: three genomes for three lifestyles.</title>
        <authorList>
            <person name="Vallenet D."/>
            <person name="Nordmann P."/>
            <person name="Barbe V."/>
            <person name="Poirel L."/>
            <person name="Mangenot S."/>
            <person name="Bataille E."/>
            <person name="Dossat C."/>
            <person name="Gas S."/>
            <person name="Kreimeyer A."/>
            <person name="Lenoble P."/>
            <person name="Oztas S."/>
            <person name="Poulain J."/>
            <person name="Segurens B."/>
            <person name="Robert C."/>
            <person name="Abergel C."/>
            <person name="Claverie J.-M."/>
            <person name="Raoult D."/>
            <person name="Medigue C."/>
            <person name="Weissenbach J."/>
            <person name="Cruveiller S."/>
        </authorList>
    </citation>
    <scope>NUCLEOTIDE SEQUENCE [LARGE SCALE GENOMIC DNA]</scope>
    <source>
        <strain>AYE</strain>
    </source>
</reference>
<accession>B0V7E0</accession>
<proteinExistence type="inferred from homology"/>
<evidence type="ECO:0000255" key="1">
    <source>
        <dbReference type="HAMAP-Rule" id="MF_00093"/>
    </source>
</evidence>
<feature type="chain" id="PRO_1000093415" description="Peptide chain release factor 1">
    <location>
        <begin position="1"/>
        <end position="362"/>
    </location>
</feature>
<feature type="modified residue" description="N5-methylglutamine" evidence="1">
    <location>
        <position position="235"/>
    </location>
</feature>
<protein>
    <recommendedName>
        <fullName evidence="1">Peptide chain release factor 1</fullName>
        <shortName evidence="1">RF-1</shortName>
    </recommendedName>
</protein>
<name>RF1_ACIBY</name>
<keyword id="KW-0963">Cytoplasm</keyword>
<keyword id="KW-0488">Methylation</keyword>
<keyword id="KW-0648">Protein biosynthesis</keyword>
<comment type="function">
    <text evidence="1">Peptide chain release factor 1 directs the termination of translation in response to the peptide chain termination codons UAG and UAA.</text>
</comment>
<comment type="subcellular location">
    <subcellularLocation>
        <location evidence="1">Cytoplasm</location>
    </subcellularLocation>
</comment>
<comment type="PTM">
    <text evidence="1">Methylated by PrmC. Methylation increases the termination efficiency of RF1.</text>
</comment>
<comment type="similarity">
    <text evidence="1">Belongs to the prokaryotic/mitochondrial release factor family.</text>
</comment>
<organism>
    <name type="scientific">Acinetobacter baumannii (strain AYE)</name>
    <dbReference type="NCBI Taxonomy" id="509173"/>
    <lineage>
        <taxon>Bacteria</taxon>
        <taxon>Pseudomonadati</taxon>
        <taxon>Pseudomonadota</taxon>
        <taxon>Gammaproteobacteria</taxon>
        <taxon>Moraxellales</taxon>
        <taxon>Moraxellaceae</taxon>
        <taxon>Acinetobacter</taxon>
        <taxon>Acinetobacter calcoaceticus/baumannii complex</taxon>
    </lineage>
</organism>